<feature type="chain" id="PRO_0000315367" description="Trans-1,2-dihydrobenzene-1,2-diol dehydrogenase">
    <location>
        <begin position="1" status="less than"/>
        <end position="329"/>
    </location>
</feature>
<feature type="site" description="May play an important role in coenzyme binding" evidence="1">
    <location>
        <position position="65"/>
    </location>
</feature>
<feature type="site" description="May play an important role in coenzyme binding" evidence="1">
    <location>
        <position position="73"/>
    </location>
</feature>
<feature type="site" description="May play an important role in coenzyme binding" evidence="1">
    <location>
        <position position="91"/>
    </location>
</feature>
<feature type="site" description="May play an important role for the adaptation of the alcohol substrate into the binding site" evidence="1">
    <location>
        <position position="170"/>
    </location>
</feature>
<feature type="site" description="May play an important role in catalytic activity" evidence="1">
    <location>
        <position position="174"/>
    </location>
</feature>
<feature type="non-terminal residue">
    <location>
        <position position="1"/>
    </location>
</feature>
<reference key="1">
    <citation type="journal article" date="1999" name="Biochem. J.">
        <title>Cloning and sequencing of the cDNA species for mammalian dimeric dihydrodiol dehydrogenases.</title>
        <authorList>
            <person name="Arimitsu E."/>
            <person name="Aoki S."/>
            <person name="Ishikura S."/>
            <person name="Nakanishi K."/>
            <person name="Matsuura K."/>
            <person name="Hara A."/>
        </authorList>
    </citation>
    <scope>NUCLEOTIDE SEQUENCE [MRNA]</scope>
    <scope>SUBUNIT</scope>
    <scope>TISSUE SPECIFICITY</scope>
    <source>
        <tissue>Lens</tissue>
    </source>
</reference>
<reference key="2">
    <citation type="journal article" date="2001" name="Chem. Biol. Interact.">
        <title>Identity of dimeric dihydrodiol dehydrogenase as NADP(+)-dependent D-xylose dehydrogenase in pig liver.</title>
        <authorList>
            <person name="Aoki S."/>
            <person name="Ishikura S."/>
            <person name="Asada Y."/>
            <person name="Usami N."/>
            <person name="Hara A."/>
        </authorList>
    </citation>
    <scope>ACTIVITY REGULATION</scope>
    <scope>BIOPHYSICOCHEMICAL PROPERTIES</scope>
    <source>
        <tissue>Lens</tissue>
    </source>
</reference>
<name>DHDH_RABIT</name>
<keyword id="KW-0521">NADP</keyword>
<keyword id="KW-0560">Oxidoreductase</keyword>
<keyword id="KW-1185">Reference proteome</keyword>
<dbReference type="EC" id="1.3.1.20"/>
<dbReference type="EC" id="1.1.1.179"/>
<dbReference type="EMBL" id="AB021928">
    <property type="protein sequence ID" value="BAA83485.1"/>
    <property type="molecule type" value="mRNA"/>
</dbReference>
<dbReference type="SMR" id="Q9TV70"/>
<dbReference type="FunCoup" id="Q9TV70">
    <property type="interactions" value="61"/>
</dbReference>
<dbReference type="STRING" id="9986.ENSOCUP00000005550"/>
<dbReference type="PaxDb" id="9986-ENSOCUP00000005550"/>
<dbReference type="eggNOG" id="KOG2741">
    <property type="taxonomic scope" value="Eukaryota"/>
</dbReference>
<dbReference type="InParanoid" id="Q9TV70"/>
<dbReference type="SABIO-RK" id="Q9TV70"/>
<dbReference type="Proteomes" id="UP000001811">
    <property type="component" value="Unplaced"/>
</dbReference>
<dbReference type="GO" id="GO:0047837">
    <property type="term" value="F:D-xylose 1-dehydrogenase (NADP+) activity"/>
    <property type="evidence" value="ECO:0007669"/>
    <property type="project" value="UniProtKB-EC"/>
</dbReference>
<dbReference type="GO" id="GO:0000166">
    <property type="term" value="F:nucleotide binding"/>
    <property type="evidence" value="ECO:0007669"/>
    <property type="project" value="InterPro"/>
</dbReference>
<dbReference type="GO" id="GO:0047115">
    <property type="term" value="F:trans-1,2-dihydrobenzene-1,2-diol dehydrogenase activity"/>
    <property type="evidence" value="ECO:0007669"/>
    <property type="project" value="UniProtKB-EC"/>
</dbReference>
<dbReference type="GO" id="GO:0042843">
    <property type="term" value="P:D-xylose catabolic process"/>
    <property type="evidence" value="ECO:0007669"/>
    <property type="project" value="TreeGrafter"/>
</dbReference>
<dbReference type="FunFam" id="3.30.360.10:FF:000031">
    <property type="entry name" value="Trans-1,2-dihydrobenzene-1,2-diol dehydrogenase"/>
    <property type="match status" value="1"/>
</dbReference>
<dbReference type="FunFam" id="3.40.50.720:FF:000269">
    <property type="entry name" value="Trans-1,2-dihydrobenzene-1,2-diol dehydrogenase"/>
    <property type="match status" value="1"/>
</dbReference>
<dbReference type="Gene3D" id="3.30.360.10">
    <property type="entry name" value="Dihydrodipicolinate Reductase, domain 2"/>
    <property type="match status" value="1"/>
</dbReference>
<dbReference type="Gene3D" id="3.40.50.720">
    <property type="entry name" value="NAD(P)-binding Rossmann-like Domain"/>
    <property type="match status" value="1"/>
</dbReference>
<dbReference type="InterPro" id="IPR000683">
    <property type="entry name" value="Gfo/Idh/MocA-like_OxRdtase_N"/>
</dbReference>
<dbReference type="InterPro" id="IPR050984">
    <property type="entry name" value="Gfo/Idh/MocA_domain"/>
</dbReference>
<dbReference type="InterPro" id="IPR055170">
    <property type="entry name" value="GFO_IDH_MocA-like_dom"/>
</dbReference>
<dbReference type="InterPro" id="IPR036291">
    <property type="entry name" value="NAD(P)-bd_dom_sf"/>
</dbReference>
<dbReference type="PANTHER" id="PTHR22604">
    <property type="entry name" value="OXIDOREDUCTASES"/>
    <property type="match status" value="1"/>
</dbReference>
<dbReference type="PANTHER" id="PTHR22604:SF105">
    <property type="entry name" value="TRANS-1,2-DIHYDROBENZENE-1,2-DIOL DEHYDROGENASE"/>
    <property type="match status" value="1"/>
</dbReference>
<dbReference type="Pfam" id="PF01408">
    <property type="entry name" value="GFO_IDH_MocA"/>
    <property type="match status" value="1"/>
</dbReference>
<dbReference type="Pfam" id="PF22725">
    <property type="entry name" value="GFO_IDH_MocA_C3"/>
    <property type="match status" value="1"/>
</dbReference>
<dbReference type="SUPFAM" id="SSF55347">
    <property type="entry name" value="Glyceraldehyde-3-phosphate dehydrogenase-like, C-terminal domain"/>
    <property type="match status" value="1"/>
</dbReference>
<dbReference type="SUPFAM" id="SSF51735">
    <property type="entry name" value="NAD(P)-binding Rossmann-fold domains"/>
    <property type="match status" value="1"/>
</dbReference>
<comment type="catalytic activity">
    <reaction>
        <text>(1R,2R)-1,2-dihydrobenzene-1,2-diol + NADP(+) = catechol + NADPH + H(+)</text>
        <dbReference type="Rhea" id="RHEA:16729"/>
        <dbReference type="ChEBI" id="CHEBI:10702"/>
        <dbReference type="ChEBI" id="CHEBI:15378"/>
        <dbReference type="ChEBI" id="CHEBI:18135"/>
        <dbReference type="ChEBI" id="CHEBI:57783"/>
        <dbReference type="ChEBI" id="CHEBI:58349"/>
        <dbReference type="EC" id="1.3.1.20"/>
    </reaction>
</comment>
<comment type="catalytic activity">
    <reaction>
        <text>D-xylose + NADP(+) = D-xylono-1,5-lactone + NADPH + H(+)</text>
        <dbReference type="Rhea" id="RHEA:22000"/>
        <dbReference type="ChEBI" id="CHEBI:15378"/>
        <dbReference type="ChEBI" id="CHEBI:15867"/>
        <dbReference type="ChEBI" id="CHEBI:53455"/>
        <dbReference type="ChEBI" id="CHEBI:57783"/>
        <dbReference type="ChEBI" id="CHEBI:58349"/>
        <dbReference type="EC" id="1.1.1.179"/>
    </reaction>
</comment>
<comment type="activity regulation">
    <text evidence="3">Stimulated by various salts.</text>
</comment>
<comment type="biophysicochemical properties">
    <kinetics>
        <KM evidence="3">4.4 mM for D-xylose</KM>
        <Vmax evidence="3">3.6 umol/min/mg enzyme with D-xylose as substrate</Vmax>
    </kinetics>
</comment>
<comment type="subunit">
    <text evidence="2">Homodimer.</text>
</comment>
<comment type="tissue specificity">
    <text evidence="2">Lens, liver and small intestine.</text>
</comment>
<comment type="similarity">
    <text evidence="4">Belongs to the Gfo/Idh/MocA family.</text>
</comment>
<protein>
    <recommendedName>
        <fullName>Trans-1,2-dihydrobenzene-1,2-diol dehydrogenase</fullName>
        <ecNumber>1.3.1.20</ecNumber>
    </recommendedName>
    <alternativeName>
        <fullName>D-xylose 1-dehydrogenase</fullName>
    </alternativeName>
    <alternativeName>
        <fullName>D-xylose-NADP dehydrogenase</fullName>
        <ecNumber>1.1.1.179</ecNumber>
    </alternativeName>
    <alternativeName>
        <fullName>Dimeric dihydrodiol dehydrogenase</fullName>
    </alternativeName>
    <alternativeName>
        <fullName>Ory2DD</fullName>
    </alternativeName>
</protein>
<evidence type="ECO:0000250" key="1"/>
<evidence type="ECO:0000269" key="2">
    <source>
    </source>
</evidence>
<evidence type="ECO:0000269" key="3">
    <source>
    </source>
</evidence>
<evidence type="ECO:0000305" key="4"/>
<gene>
    <name type="primary">DHDH</name>
    <name type="synonym">2DD</name>
</gene>
<accession>Q9TV70</accession>
<organism>
    <name type="scientific">Oryctolagus cuniculus</name>
    <name type="common">Rabbit</name>
    <dbReference type="NCBI Taxonomy" id="9986"/>
    <lineage>
        <taxon>Eukaryota</taxon>
        <taxon>Metazoa</taxon>
        <taxon>Chordata</taxon>
        <taxon>Craniata</taxon>
        <taxon>Vertebrata</taxon>
        <taxon>Euteleostomi</taxon>
        <taxon>Mammalia</taxon>
        <taxon>Eutheria</taxon>
        <taxon>Euarchontoglires</taxon>
        <taxon>Glires</taxon>
        <taxon>Lagomorpha</taxon>
        <taxon>Leporidae</taxon>
        <taxon>Oryctolagus</taxon>
    </lineage>
</organism>
<sequence length="329" mass="35795">VVSAGLIAGDFVTVLQALPRSEHQVVAVAARDLRRAEEFARTHGIPKAYGSYEELAKDPDVEVAYIGTQHPQHKAAVLLFLAAGKAVLCEKPLGVNAAEVREMVAEARSRGLFLMEAIWTRCFPAVDALKSLLAQGALGDLRVARAEFGENLTQVLRSVDWAQAGGGLLDLGIYCVQFISMVFGGQKPEKISAVGRRYETGVDDTVTVLLQYPGGVHGSFTCSISSKLSNTCSVSGTKGIAQLLEPCWCPTELVVNKERKEFPLAPEENKKFNYRNGMGMSYEAQHVRDCLRKGLKESPVIPLAESQLLADILEEVRKAIGVTFPQDKH</sequence>
<proteinExistence type="evidence at protein level"/>